<name>TSAD_VIBCM</name>
<accession>C3LS11</accession>
<protein>
    <recommendedName>
        <fullName evidence="1">tRNA N6-adenosine threonylcarbamoyltransferase</fullName>
        <ecNumber evidence="1">2.3.1.234</ecNumber>
    </recommendedName>
    <alternativeName>
        <fullName evidence="1">N6-L-threonylcarbamoyladenine synthase</fullName>
        <shortName evidence="1">t(6)A synthase</shortName>
    </alternativeName>
    <alternativeName>
        <fullName evidence="1">t(6)A37 threonylcarbamoyladenosine biosynthesis protein TsaD</fullName>
    </alternativeName>
    <alternativeName>
        <fullName evidence="1">tRNA threonylcarbamoyladenosine biosynthesis protein TsaD</fullName>
    </alternativeName>
</protein>
<gene>
    <name evidence="1" type="primary">tsaD</name>
    <name type="synonym">gcp</name>
    <name type="ordered locus">VCM66_0479</name>
</gene>
<keyword id="KW-0012">Acyltransferase</keyword>
<keyword id="KW-0963">Cytoplasm</keyword>
<keyword id="KW-0408">Iron</keyword>
<keyword id="KW-0479">Metal-binding</keyword>
<keyword id="KW-0808">Transferase</keyword>
<keyword id="KW-0819">tRNA processing</keyword>
<reference key="1">
    <citation type="journal article" date="2008" name="PLoS ONE">
        <title>A recalibrated molecular clock and independent origins for the cholera pandemic clones.</title>
        <authorList>
            <person name="Feng L."/>
            <person name="Reeves P.R."/>
            <person name="Lan R."/>
            <person name="Ren Y."/>
            <person name="Gao C."/>
            <person name="Zhou Z."/>
            <person name="Ren Y."/>
            <person name="Cheng J."/>
            <person name="Wang W."/>
            <person name="Wang J."/>
            <person name="Qian W."/>
            <person name="Li D."/>
            <person name="Wang L."/>
        </authorList>
    </citation>
    <scope>NUCLEOTIDE SEQUENCE [LARGE SCALE GENOMIC DNA]</scope>
    <source>
        <strain>M66-2</strain>
    </source>
</reference>
<sequence>MRIIGIETSCDETGIAIYDDEKGLLSHKLYSQVKLHADYGGVVPELASRDHVKKTIPLIKAAMAEANVTPQDLDGVAFTAGPGLVGALLVGATIGRSLAYAWDVPAVPVHHMEGHLLAPMLEENPPPFPFVALLVSGGHTMLVEVKNIGEYRILGESIDDAAGEAFDKTAKLMGLDYPGGPLLAKLAEKGTPGRFKFPRPMTDRPGLDMSFSGLKTFTANTIAANGDDEQTRADIAYAFQEAVCDTLVIKCKRALEETGLKRVVIAGGVSANKQLRADLEKLAKKIGGEVYYPRTEFCTDNGAMIAYAGMQRLKNGDVCELGLQARPRWPIDQLTSIQK</sequence>
<feature type="chain" id="PRO_1000184991" description="tRNA N6-adenosine threonylcarbamoyltransferase">
    <location>
        <begin position="1"/>
        <end position="339"/>
    </location>
</feature>
<feature type="binding site" evidence="1">
    <location>
        <position position="111"/>
    </location>
    <ligand>
        <name>Fe cation</name>
        <dbReference type="ChEBI" id="CHEBI:24875"/>
    </ligand>
</feature>
<feature type="binding site" evidence="1">
    <location>
        <position position="115"/>
    </location>
    <ligand>
        <name>Fe cation</name>
        <dbReference type="ChEBI" id="CHEBI:24875"/>
    </ligand>
</feature>
<feature type="binding site" evidence="1">
    <location>
        <begin position="134"/>
        <end position="138"/>
    </location>
    <ligand>
        <name>substrate</name>
    </ligand>
</feature>
<feature type="binding site" evidence="1">
    <location>
        <position position="167"/>
    </location>
    <ligand>
        <name>substrate</name>
    </ligand>
</feature>
<feature type="binding site" evidence="1">
    <location>
        <position position="180"/>
    </location>
    <ligand>
        <name>substrate</name>
    </ligand>
</feature>
<feature type="binding site" evidence="1">
    <location>
        <position position="272"/>
    </location>
    <ligand>
        <name>substrate</name>
    </ligand>
</feature>
<feature type="binding site" evidence="1">
    <location>
        <position position="300"/>
    </location>
    <ligand>
        <name>Fe cation</name>
        <dbReference type="ChEBI" id="CHEBI:24875"/>
    </ligand>
</feature>
<proteinExistence type="inferred from homology"/>
<dbReference type="EC" id="2.3.1.234" evidence="1"/>
<dbReference type="EMBL" id="CP001233">
    <property type="protein sequence ID" value="ACP04804.1"/>
    <property type="molecule type" value="Genomic_DNA"/>
</dbReference>
<dbReference type="RefSeq" id="WP_001220122.1">
    <property type="nucleotide sequence ID" value="NC_012578.1"/>
</dbReference>
<dbReference type="SMR" id="C3LS11"/>
<dbReference type="KEGG" id="vcm:VCM66_0479"/>
<dbReference type="HOGENOM" id="CLU_023208_0_2_6"/>
<dbReference type="Proteomes" id="UP000001217">
    <property type="component" value="Chromosome I"/>
</dbReference>
<dbReference type="GO" id="GO:0005737">
    <property type="term" value="C:cytoplasm"/>
    <property type="evidence" value="ECO:0007669"/>
    <property type="project" value="UniProtKB-SubCell"/>
</dbReference>
<dbReference type="GO" id="GO:0005506">
    <property type="term" value="F:iron ion binding"/>
    <property type="evidence" value="ECO:0007669"/>
    <property type="project" value="UniProtKB-UniRule"/>
</dbReference>
<dbReference type="GO" id="GO:0061711">
    <property type="term" value="F:N(6)-L-threonylcarbamoyladenine synthase activity"/>
    <property type="evidence" value="ECO:0007669"/>
    <property type="project" value="UniProtKB-EC"/>
</dbReference>
<dbReference type="GO" id="GO:0002949">
    <property type="term" value="P:tRNA threonylcarbamoyladenosine modification"/>
    <property type="evidence" value="ECO:0007669"/>
    <property type="project" value="UniProtKB-UniRule"/>
</dbReference>
<dbReference type="CDD" id="cd24133">
    <property type="entry name" value="ASKHA_NBD_TsaD_bac"/>
    <property type="match status" value="1"/>
</dbReference>
<dbReference type="FunFam" id="3.30.420.40:FF:000031">
    <property type="entry name" value="tRNA N6-adenosine threonylcarbamoyltransferase"/>
    <property type="match status" value="1"/>
</dbReference>
<dbReference type="Gene3D" id="3.30.420.40">
    <property type="match status" value="2"/>
</dbReference>
<dbReference type="HAMAP" id="MF_01445">
    <property type="entry name" value="TsaD"/>
    <property type="match status" value="1"/>
</dbReference>
<dbReference type="InterPro" id="IPR043129">
    <property type="entry name" value="ATPase_NBD"/>
</dbReference>
<dbReference type="InterPro" id="IPR000905">
    <property type="entry name" value="Gcp-like_dom"/>
</dbReference>
<dbReference type="InterPro" id="IPR017861">
    <property type="entry name" value="KAE1/TsaD"/>
</dbReference>
<dbReference type="InterPro" id="IPR017860">
    <property type="entry name" value="Peptidase_M22_CS"/>
</dbReference>
<dbReference type="InterPro" id="IPR022450">
    <property type="entry name" value="TsaD"/>
</dbReference>
<dbReference type="NCBIfam" id="TIGR00329">
    <property type="entry name" value="gcp_kae1"/>
    <property type="match status" value="1"/>
</dbReference>
<dbReference type="NCBIfam" id="TIGR03723">
    <property type="entry name" value="T6A_TsaD_YgjD"/>
    <property type="match status" value="1"/>
</dbReference>
<dbReference type="PANTHER" id="PTHR11735">
    <property type="entry name" value="TRNA N6-ADENOSINE THREONYLCARBAMOYLTRANSFERASE"/>
    <property type="match status" value="1"/>
</dbReference>
<dbReference type="PANTHER" id="PTHR11735:SF6">
    <property type="entry name" value="TRNA N6-ADENOSINE THREONYLCARBAMOYLTRANSFERASE, MITOCHONDRIAL"/>
    <property type="match status" value="1"/>
</dbReference>
<dbReference type="Pfam" id="PF00814">
    <property type="entry name" value="TsaD"/>
    <property type="match status" value="1"/>
</dbReference>
<dbReference type="PRINTS" id="PR00789">
    <property type="entry name" value="OSIALOPTASE"/>
</dbReference>
<dbReference type="SUPFAM" id="SSF53067">
    <property type="entry name" value="Actin-like ATPase domain"/>
    <property type="match status" value="2"/>
</dbReference>
<dbReference type="PROSITE" id="PS01016">
    <property type="entry name" value="GLYCOPROTEASE"/>
    <property type="match status" value="1"/>
</dbReference>
<organism>
    <name type="scientific">Vibrio cholerae serotype O1 (strain M66-2)</name>
    <dbReference type="NCBI Taxonomy" id="579112"/>
    <lineage>
        <taxon>Bacteria</taxon>
        <taxon>Pseudomonadati</taxon>
        <taxon>Pseudomonadota</taxon>
        <taxon>Gammaproteobacteria</taxon>
        <taxon>Vibrionales</taxon>
        <taxon>Vibrionaceae</taxon>
        <taxon>Vibrio</taxon>
    </lineage>
</organism>
<evidence type="ECO:0000255" key="1">
    <source>
        <dbReference type="HAMAP-Rule" id="MF_01445"/>
    </source>
</evidence>
<comment type="function">
    <text evidence="1">Required for the formation of a threonylcarbamoyl group on adenosine at position 37 (t(6)A37) in tRNAs that read codons beginning with adenine. Is involved in the transfer of the threonylcarbamoyl moiety of threonylcarbamoyl-AMP (TC-AMP) to the N6 group of A37, together with TsaE and TsaB. TsaD likely plays a direct catalytic role in this reaction.</text>
</comment>
<comment type="catalytic activity">
    <reaction evidence="1">
        <text>L-threonylcarbamoyladenylate + adenosine(37) in tRNA = N(6)-L-threonylcarbamoyladenosine(37) in tRNA + AMP + H(+)</text>
        <dbReference type="Rhea" id="RHEA:37059"/>
        <dbReference type="Rhea" id="RHEA-COMP:10162"/>
        <dbReference type="Rhea" id="RHEA-COMP:10163"/>
        <dbReference type="ChEBI" id="CHEBI:15378"/>
        <dbReference type="ChEBI" id="CHEBI:73682"/>
        <dbReference type="ChEBI" id="CHEBI:74411"/>
        <dbReference type="ChEBI" id="CHEBI:74418"/>
        <dbReference type="ChEBI" id="CHEBI:456215"/>
        <dbReference type="EC" id="2.3.1.234"/>
    </reaction>
</comment>
<comment type="cofactor">
    <cofactor evidence="1">
        <name>Fe(2+)</name>
        <dbReference type="ChEBI" id="CHEBI:29033"/>
    </cofactor>
    <text evidence="1">Binds 1 Fe(2+) ion per subunit.</text>
</comment>
<comment type="subcellular location">
    <subcellularLocation>
        <location evidence="1">Cytoplasm</location>
    </subcellularLocation>
</comment>
<comment type="similarity">
    <text evidence="1">Belongs to the KAE1 / TsaD family.</text>
</comment>